<accession>P86684</accession>
<protein>
    <recommendedName>
        <fullName evidence="4">Dermaseptin-J6</fullName>
        <shortName evidence="4">DRS-J6</shortName>
    </recommendedName>
</protein>
<name>DMS6_PHAJA</name>
<organism>
    <name type="scientific">Phasmahyla jandaia</name>
    <name type="common">Jandaia leaf frog</name>
    <name type="synonym">Phyllomedusa jandaia</name>
    <dbReference type="NCBI Taxonomy" id="762504"/>
    <lineage>
        <taxon>Eukaryota</taxon>
        <taxon>Metazoa</taxon>
        <taxon>Chordata</taxon>
        <taxon>Craniata</taxon>
        <taxon>Vertebrata</taxon>
        <taxon>Euteleostomi</taxon>
        <taxon>Amphibia</taxon>
        <taxon>Batrachia</taxon>
        <taxon>Anura</taxon>
        <taxon>Neobatrachia</taxon>
        <taxon>Hyloidea</taxon>
        <taxon>Hylidae</taxon>
        <taxon>Phyllomedusinae</taxon>
        <taxon>Phasmahyla</taxon>
    </lineage>
</organism>
<dbReference type="SMR" id="P86684"/>
<dbReference type="GO" id="GO:0005576">
    <property type="term" value="C:extracellular region"/>
    <property type="evidence" value="ECO:0007669"/>
    <property type="project" value="UniProtKB-SubCell"/>
</dbReference>
<dbReference type="GO" id="GO:0042742">
    <property type="term" value="P:defense response to bacterium"/>
    <property type="evidence" value="ECO:0007669"/>
    <property type="project" value="UniProtKB-KW"/>
</dbReference>
<dbReference type="InterPro" id="IPR022731">
    <property type="entry name" value="Dermaseptin_dom"/>
</dbReference>
<dbReference type="Pfam" id="PF12121">
    <property type="entry name" value="DD_K"/>
    <property type="match status" value="1"/>
</dbReference>
<sequence>GLWSKIKEAGKAAVKAAGKAALGAVADSV</sequence>
<reference evidence="5" key="1">
    <citation type="journal article" date="2011" name="Toxicon">
        <title>Peptidomic dissection of the skin secretion of Phasmahyla jandaia (Bokermann and Sazima, 1978) (Anura, Hylidae, Phyllomedusinae).</title>
        <authorList>
            <person name="Rates B."/>
            <person name="Silva L.P."/>
            <person name="Ireno I.C."/>
            <person name="Leite F.S."/>
            <person name="Borges M.H."/>
            <person name="Bloch C. Jr."/>
            <person name="De Lima M.E."/>
            <person name="Pimenta A.M."/>
        </authorList>
    </citation>
    <scope>PROTEIN SEQUENCE</scope>
    <scope>SUBCELLULAR LOCATION</scope>
    <scope>TISSUE SPECIFICITY</scope>
    <scope>MASS SPECTROMETRY</scope>
    <scope>AMIDATION AT VAL-29</scope>
    <source>
        <tissue evidence="3">Skin secretion</tissue>
    </source>
</reference>
<comment type="function">
    <text evidence="1">Has antimicrobial activity.</text>
</comment>
<comment type="subcellular location">
    <subcellularLocation>
        <location evidence="3">Secreted</location>
    </subcellularLocation>
</comment>
<comment type="tissue specificity">
    <text evidence="3">Expressed by the skin glands.</text>
</comment>
<comment type="mass spectrometry"/>
<comment type="similarity">
    <text evidence="2">Belongs to the frog skin active peptide (FSAP) family. Dermaseptin subfamily.</text>
</comment>
<feature type="peptide" id="PRO_0000404615" description="Dermaseptin-J6" evidence="3">
    <location>
        <begin position="1"/>
        <end position="29"/>
    </location>
</feature>
<feature type="modified residue" description="Valine amide" evidence="3">
    <location>
        <position position="29"/>
    </location>
</feature>
<feature type="unsure residue" description="L or I" evidence="3">
    <location>
        <position position="2"/>
    </location>
</feature>
<feature type="unsure residue" description="K or Q" evidence="3">
    <location>
        <position position="5"/>
    </location>
</feature>
<feature type="unsure residue" description="I or L" evidence="3">
    <location>
        <position position="6"/>
    </location>
</feature>
<feature type="unsure residue" description="K or Q" evidence="3">
    <location>
        <position position="7"/>
    </location>
</feature>
<feature type="unsure residue" description="K or Q" evidence="3">
    <location>
        <position position="11"/>
    </location>
</feature>
<feature type="unsure residue" description="K or Q" evidence="3">
    <location>
        <position position="15"/>
    </location>
</feature>
<feature type="unsure residue" description="K or Q" evidence="3">
    <location>
        <position position="19"/>
    </location>
</feature>
<feature type="unsure residue" description="L or I" evidence="3">
    <location>
        <position position="22"/>
    </location>
</feature>
<proteinExistence type="evidence at protein level"/>
<keyword id="KW-0027">Amidation</keyword>
<keyword id="KW-0878">Amphibian defense peptide</keyword>
<keyword id="KW-0044">Antibiotic</keyword>
<keyword id="KW-0929">Antimicrobial</keyword>
<keyword id="KW-0903">Direct protein sequencing</keyword>
<keyword id="KW-0964">Secreted</keyword>
<evidence type="ECO:0000250" key="1">
    <source>
        <dbReference type="UniProtKB" id="P84921"/>
    </source>
</evidence>
<evidence type="ECO:0000255" key="2"/>
<evidence type="ECO:0000269" key="3">
    <source>
    </source>
</evidence>
<evidence type="ECO:0000303" key="4">
    <source>
    </source>
</evidence>
<evidence type="ECO:0000305" key="5"/>